<name>SLU7_ORYSJ</name>
<proteinExistence type="evidence at transcript level"/>
<dbReference type="EMBL" id="AP003886">
    <property type="protein sequence ID" value="BAD08862.1"/>
    <property type="molecule type" value="Genomic_DNA"/>
</dbReference>
<dbReference type="EMBL" id="AP008214">
    <property type="protein sequence ID" value="BAF22819.1"/>
    <property type="molecule type" value="Genomic_DNA"/>
</dbReference>
<dbReference type="EMBL" id="AP014964">
    <property type="protein sequence ID" value="BAT03672.1"/>
    <property type="molecule type" value="Genomic_DNA"/>
</dbReference>
<dbReference type="EMBL" id="CM000145">
    <property type="protein sequence ID" value="EEE67981.1"/>
    <property type="molecule type" value="Genomic_DNA"/>
</dbReference>
<dbReference type="EMBL" id="AK059350">
    <property type="protein sequence ID" value="BAG86968.1"/>
    <property type="molecule type" value="mRNA"/>
</dbReference>
<dbReference type="EMBL" id="AK099242">
    <property type="protein sequence ID" value="BAG94015.1"/>
    <property type="molecule type" value="mRNA"/>
</dbReference>
<dbReference type="EMBL" id="AK121348">
    <property type="protein sequence ID" value="BAH00440.1"/>
    <property type="molecule type" value="mRNA"/>
</dbReference>
<dbReference type="RefSeq" id="XP_015650437.1">
    <property type="nucleotide sequence ID" value="XM_015794951.1"/>
</dbReference>
<dbReference type="SMR" id="Q6ZK48"/>
<dbReference type="FunCoup" id="Q6ZK48">
    <property type="interactions" value="2761"/>
</dbReference>
<dbReference type="STRING" id="39947.Q6ZK48"/>
<dbReference type="PaxDb" id="39947-Q6ZK48"/>
<dbReference type="EnsemblPlants" id="Os08t0127700-01">
    <property type="protein sequence ID" value="Os08t0127700-01"/>
    <property type="gene ID" value="Os08g0127700"/>
</dbReference>
<dbReference type="EnsemblPlants" id="Os08t0127700-02">
    <property type="protein sequence ID" value="Os08t0127700-02"/>
    <property type="gene ID" value="Os08g0127700"/>
</dbReference>
<dbReference type="Gramene" id="Os08t0127700-01">
    <property type="protein sequence ID" value="Os08t0127700-01"/>
    <property type="gene ID" value="Os08g0127700"/>
</dbReference>
<dbReference type="Gramene" id="Os08t0127700-02">
    <property type="protein sequence ID" value="Os08t0127700-02"/>
    <property type="gene ID" value="Os08g0127700"/>
</dbReference>
<dbReference type="KEGG" id="dosa:Os08g0127700"/>
<dbReference type="eggNOG" id="KOG2560">
    <property type="taxonomic scope" value="Eukaryota"/>
</dbReference>
<dbReference type="HOGENOM" id="CLU_019317_3_1_1"/>
<dbReference type="InParanoid" id="Q6ZK48"/>
<dbReference type="OMA" id="KYAWESQ"/>
<dbReference type="OrthoDB" id="249612at2759"/>
<dbReference type="Proteomes" id="UP000000763">
    <property type="component" value="Chromosome 8"/>
</dbReference>
<dbReference type="Proteomes" id="UP000007752">
    <property type="component" value="Chromosome 8"/>
</dbReference>
<dbReference type="Proteomes" id="UP000059680">
    <property type="component" value="Chromosome 8"/>
</dbReference>
<dbReference type="GO" id="GO:0005681">
    <property type="term" value="C:spliceosomal complex"/>
    <property type="evidence" value="ECO:0000318"/>
    <property type="project" value="GO_Central"/>
</dbReference>
<dbReference type="GO" id="GO:0030628">
    <property type="term" value="F:pre-mRNA 3'-splice site binding"/>
    <property type="evidence" value="ECO:0007669"/>
    <property type="project" value="InterPro"/>
</dbReference>
<dbReference type="GO" id="GO:0008270">
    <property type="term" value="F:zinc ion binding"/>
    <property type="evidence" value="ECO:0007669"/>
    <property type="project" value="UniProtKB-KW"/>
</dbReference>
<dbReference type="GO" id="GO:0000398">
    <property type="term" value="P:mRNA splicing, via spliceosome"/>
    <property type="evidence" value="ECO:0007669"/>
    <property type="project" value="InterPro"/>
</dbReference>
<dbReference type="GO" id="GO:0008380">
    <property type="term" value="P:RNA splicing"/>
    <property type="evidence" value="ECO:0000318"/>
    <property type="project" value="GO_Central"/>
</dbReference>
<dbReference type="InterPro" id="IPR021715">
    <property type="entry name" value="Slu7_dom"/>
</dbReference>
<dbReference type="InterPro" id="IPR039974">
    <property type="entry name" value="Splicing_factor_SLU7"/>
</dbReference>
<dbReference type="PANTHER" id="PTHR12942:SF2">
    <property type="entry name" value="PRE-MRNA-SPLICING FACTOR SLU7"/>
    <property type="match status" value="1"/>
</dbReference>
<dbReference type="PANTHER" id="PTHR12942">
    <property type="entry name" value="STEP II SPLICING FACTOR SLU7"/>
    <property type="match status" value="1"/>
</dbReference>
<dbReference type="Pfam" id="PF11708">
    <property type="entry name" value="Slu7"/>
    <property type="match status" value="1"/>
</dbReference>
<comment type="function">
    <text evidence="1">Participates in the second catalytic step of pre-mRNA splicing, when the free hydroxyl group of exon I attacks the 3'-splice site to generate spliced mRNA and the excised lariat intron.</text>
</comment>
<comment type="subcellular location">
    <subcellularLocation>
        <location evidence="1">Nucleus</location>
    </subcellularLocation>
</comment>
<comment type="similarity">
    <text evidence="3">Belongs to the SLU7 family.</text>
</comment>
<reference key="1">
    <citation type="journal article" date="2005" name="Nature">
        <title>The map-based sequence of the rice genome.</title>
        <authorList>
            <consortium name="International rice genome sequencing project (IRGSP)"/>
        </authorList>
    </citation>
    <scope>NUCLEOTIDE SEQUENCE [LARGE SCALE GENOMIC DNA]</scope>
    <source>
        <strain>cv. Nipponbare</strain>
    </source>
</reference>
<reference key="2">
    <citation type="journal article" date="2008" name="Nucleic Acids Res.">
        <title>The rice annotation project database (RAP-DB): 2008 update.</title>
        <authorList>
            <consortium name="The rice annotation project (RAP)"/>
        </authorList>
    </citation>
    <scope>GENOME REANNOTATION</scope>
    <source>
        <strain>cv. Nipponbare</strain>
    </source>
</reference>
<reference key="3">
    <citation type="journal article" date="2013" name="Rice">
        <title>Improvement of the Oryza sativa Nipponbare reference genome using next generation sequence and optical map data.</title>
        <authorList>
            <person name="Kawahara Y."/>
            <person name="de la Bastide M."/>
            <person name="Hamilton J.P."/>
            <person name="Kanamori H."/>
            <person name="McCombie W.R."/>
            <person name="Ouyang S."/>
            <person name="Schwartz D.C."/>
            <person name="Tanaka T."/>
            <person name="Wu J."/>
            <person name="Zhou S."/>
            <person name="Childs K.L."/>
            <person name="Davidson R.M."/>
            <person name="Lin H."/>
            <person name="Quesada-Ocampo L."/>
            <person name="Vaillancourt B."/>
            <person name="Sakai H."/>
            <person name="Lee S.S."/>
            <person name="Kim J."/>
            <person name="Numa H."/>
            <person name="Itoh T."/>
            <person name="Buell C.R."/>
            <person name="Matsumoto T."/>
        </authorList>
    </citation>
    <scope>GENOME REANNOTATION</scope>
    <source>
        <strain>cv. Nipponbare</strain>
    </source>
</reference>
<reference key="4">
    <citation type="journal article" date="2005" name="PLoS Biol.">
        <title>The genomes of Oryza sativa: a history of duplications.</title>
        <authorList>
            <person name="Yu J."/>
            <person name="Wang J."/>
            <person name="Lin W."/>
            <person name="Li S."/>
            <person name="Li H."/>
            <person name="Zhou J."/>
            <person name="Ni P."/>
            <person name="Dong W."/>
            <person name="Hu S."/>
            <person name="Zeng C."/>
            <person name="Zhang J."/>
            <person name="Zhang Y."/>
            <person name="Li R."/>
            <person name="Xu Z."/>
            <person name="Li S."/>
            <person name="Li X."/>
            <person name="Zheng H."/>
            <person name="Cong L."/>
            <person name="Lin L."/>
            <person name="Yin J."/>
            <person name="Geng J."/>
            <person name="Li G."/>
            <person name="Shi J."/>
            <person name="Liu J."/>
            <person name="Lv H."/>
            <person name="Li J."/>
            <person name="Wang J."/>
            <person name="Deng Y."/>
            <person name="Ran L."/>
            <person name="Shi X."/>
            <person name="Wang X."/>
            <person name="Wu Q."/>
            <person name="Li C."/>
            <person name="Ren X."/>
            <person name="Wang J."/>
            <person name="Wang X."/>
            <person name="Li D."/>
            <person name="Liu D."/>
            <person name="Zhang X."/>
            <person name="Ji Z."/>
            <person name="Zhao W."/>
            <person name="Sun Y."/>
            <person name="Zhang Z."/>
            <person name="Bao J."/>
            <person name="Han Y."/>
            <person name="Dong L."/>
            <person name="Ji J."/>
            <person name="Chen P."/>
            <person name="Wu S."/>
            <person name="Liu J."/>
            <person name="Xiao Y."/>
            <person name="Bu D."/>
            <person name="Tan J."/>
            <person name="Yang L."/>
            <person name="Ye C."/>
            <person name="Zhang J."/>
            <person name="Xu J."/>
            <person name="Zhou Y."/>
            <person name="Yu Y."/>
            <person name="Zhang B."/>
            <person name="Zhuang S."/>
            <person name="Wei H."/>
            <person name="Liu B."/>
            <person name="Lei M."/>
            <person name="Yu H."/>
            <person name="Li Y."/>
            <person name="Xu H."/>
            <person name="Wei S."/>
            <person name="He X."/>
            <person name="Fang L."/>
            <person name="Zhang Z."/>
            <person name="Zhang Y."/>
            <person name="Huang X."/>
            <person name="Su Z."/>
            <person name="Tong W."/>
            <person name="Li J."/>
            <person name="Tong Z."/>
            <person name="Li S."/>
            <person name="Ye J."/>
            <person name="Wang L."/>
            <person name="Fang L."/>
            <person name="Lei T."/>
            <person name="Chen C.-S."/>
            <person name="Chen H.-C."/>
            <person name="Xu Z."/>
            <person name="Li H."/>
            <person name="Huang H."/>
            <person name="Zhang F."/>
            <person name="Xu H."/>
            <person name="Li N."/>
            <person name="Zhao C."/>
            <person name="Li S."/>
            <person name="Dong L."/>
            <person name="Huang Y."/>
            <person name="Li L."/>
            <person name="Xi Y."/>
            <person name="Qi Q."/>
            <person name="Li W."/>
            <person name="Zhang B."/>
            <person name="Hu W."/>
            <person name="Zhang Y."/>
            <person name="Tian X."/>
            <person name="Jiao Y."/>
            <person name="Liang X."/>
            <person name="Jin J."/>
            <person name="Gao L."/>
            <person name="Zheng W."/>
            <person name="Hao B."/>
            <person name="Liu S.-M."/>
            <person name="Wang W."/>
            <person name="Yuan L."/>
            <person name="Cao M."/>
            <person name="McDermott J."/>
            <person name="Samudrala R."/>
            <person name="Wang J."/>
            <person name="Wong G.K.-S."/>
            <person name="Yang H."/>
        </authorList>
    </citation>
    <scope>NUCLEOTIDE SEQUENCE [LARGE SCALE GENOMIC DNA]</scope>
    <source>
        <strain>cv. Nipponbare</strain>
    </source>
</reference>
<reference key="5">
    <citation type="journal article" date="2003" name="Science">
        <title>Collection, mapping, and annotation of over 28,000 cDNA clones from japonica rice.</title>
        <authorList>
            <consortium name="The rice full-length cDNA consortium"/>
        </authorList>
    </citation>
    <scope>NUCLEOTIDE SEQUENCE [LARGE SCALE MRNA]</scope>
    <source>
        <strain>cv. Nipponbare</strain>
    </source>
</reference>
<keyword id="KW-0479">Metal-binding</keyword>
<keyword id="KW-0507">mRNA processing</keyword>
<keyword id="KW-0508">mRNA splicing</keyword>
<keyword id="KW-0539">Nucleus</keyword>
<keyword id="KW-1185">Reference proteome</keyword>
<keyword id="KW-0747">Spliceosome</keyword>
<keyword id="KW-0862">Zinc</keyword>
<keyword id="KW-0863">Zinc-finger</keyword>
<gene>
    <name type="ordered locus">Os08g0127700</name>
    <name type="ordered locus">LOC_Os08g03390</name>
    <name type="ORF">OJ1163_G08.29</name>
    <name type="ORF">OsJ_024869</name>
    <name evidence="4" type="ORF">OsJ_25904</name>
</gene>
<organism>
    <name type="scientific">Oryza sativa subsp. japonica</name>
    <name type="common">Rice</name>
    <dbReference type="NCBI Taxonomy" id="39947"/>
    <lineage>
        <taxon>Eukaryota</taxon>
        <taxon>Viridiplantae</taxon>
        <taxon>Streptophyta</taxon>
        <taxon>Embryophyta</taxon>
        <taxon>Tracheophyta</taxon>
        <taxon>Spermatophyta</taxon>
        <taxon>Magnoliopsida</taxon>
        <taxon>Liliopsida</taxon>
        <taxon>Poales</taxon>
        <taxon>Poaceae</taxon>
        <taxon>BOP clade</taxon>
        <taxon>Oryzoideae</taxon>
        <taxon>Oryzeae</taxon>
        <taxon>Oryzinae</taxon>
        <taxon>Oryza</taxon>
        <taxon>Oryza sativa</taxon>
    </lineage>
</organism>
<protein>
    <recommendedName>
        <fullName>Pre-mRNA-splicing factor SLU7</fullName>
    </recommendedName>
</protein>
<evidence type="ECO:0000250" key="1"/>
<evidence type="ECO:0000256" key="2">
    <source>
        <dbReference type="SAM" id="MobiDB-lite"/>
    </source>
</evidence>
<evidence type="ECO:0000305" key="3"/>
<evidence type="ECO:0000312" key="4">
    <source>
        <dbReference type="EMBL" id="EEE67981.1"/>
    </source>
</evidence>
<accession>Q6ZK48</accession>
<accession>A3BP97</accession>
<accession>B7E3M1</accession>
<feature type="chain" id="PRO_0000289206" description="Pre-mRNA-splicing factor SLU7">
    <location>
        <begin position="1"/>
        <end position="536"/>
    </location>
</feature>
<feature type="zinc finger region" description="CCHC-type">
    <location>
        <begin position="94"/>
        <end position="111"/>
    </location>
</feature>
<feature type="region of interest" description="Disordered" evidence="2">
    <location>
        <begin position="22"/>
        <end position="42"/>
    </location>
</feature>
<feature type="region of interest" description="Disordered" evidence="2">
    <location>
        <begin position="178"/>
        <end position="201"/>
    </location>
</feature>
<feature type="compositionally biased region" description="Acidic residues" evidence="2">
    <location>
        <begin position="182"/>
        <end position="200"/>
    </location>
</feature>
<sequence length="536" mass="62076">MATASVSFKSREDHRKQLELEEARKAGLAPAEVDEDGKEINPHIPQYMSSAPWYLNADKPSLKHQRNWKSDPNYTKSWYDRGAKLFQANKYRKGACENCGAMTHDKKSCMERPRSVGAKWTNINIAPDEKVESFELDYDGKRDRWNGYDPSTYTRVIADYEAREEARKKYLKEQQLKKLEEKDGEEGDENVASEEEDEEDGLKIDEAKVDESAQMDFAKVEKRVRTTGGGSTGTVRNLRIREDTAKYLLNLDVNSAYYDPKTRSMREDPLPDADPNDKFYVGDNQNRLSGQALEFKQLNIHAWEAFDKGQDIHMQAAPSQAELLFKSFKIKKEKLKSENKDKIMEKYGNAASEEPIPRELLLGQSEKEIEYDRTGRIIKGQDVALPKSKYEEDVFINNHTTVWGSWWKDHQWGYKCCKQTIRNSYCTGLAGIEAAEASADLMKANMARKEAAEDEPVRHEEKRLATWGTDVPNDIVLDKKLLDEALKKEGARRKEEMDERKRKYNVKWNDEVTAEDMEAYRMKRIHHDDPMRDFLH</sequence>